<keyword id="KW-0687">Ribonucleoprotein</keyword>
<keyword id="KW-0689">Ribosomal protein</keyword>
<accession>C3MXG6</accession>
<comment type="similarity">
    <text evidence="1">Belongs to the eukaryotic ribosomal protein eL31 family.</text>
</comment>
<organism>
    <name type="scientific">Saccharolobus islandicus (strain M.14.25 / Kamchatka #1)</name>
    <name type="common">Sulfolobus islandicus</name>
    <dbReference type="NCBI Taxonomy" id="427317"/>
    <lineage>
        <taxon>Archaea</taxon>
        <taxon>Thermoproteota</taxon>
        <taxon>Thermoprotei</taxon>
        <taxon>Sulfolobales</taxon>
        <taxon>Sulfolobaceae</taxon>
        <taxon>Saccharolobus</taxon>
    </lineage>
</organism>
<name>RL31_SACI4</name>
<gene>
    <name evidence="1" type="primary">rpl31e</name>
    <name type="ordered locus">M1425_1754</name>
</gene>
<reference key="1">
    <citation type="journal article" date="2009" name="Proc. Natl. Acad. Sci. U.S.A.">
        <title>Biogeography of the Sulfolobus islandicus pan-genome.</title>
        <authorList>
            <person name="Reno M.L."/>
            <person name="Held N.L."/>
            <person name="Fields C.J."/>
            <person name="Burke P.V."/>
            <person name="Whitaker R.J."/>
        </authorList>
    </citation>
    <scope>NUCLEOTIDE SEQUENCE [LARGE SCALE GENOMIC DNA]</scope>
    <source>
        <strain>M.14.25 / Kamchatka #1</strain>
    </source>
</reference>
<evidence type="ECO:0000255" key="1">
    <source>
        <dbReference type="HAMAP-Rule" id="MF_00410"/>
    </source>
</evidence>
<evidence type="ECO:0000305" key="2"/>
<sequence length="88" mass="10048">MKEKDNFEMVINLRKIKTGKRTGRSKRAVKFVRKIVARHFNADKVVIDPLLAKSISKNGNDKVVSKVRVVVSKVGEKIYLVRLAIKSR</sequence>
<feature type="chain" id="PRO_1000205979" description="Large ribosomal subunit protein eL31">
    <location>
        <begin position="1"/>
        <end position="88"/>
    </location>
</feature>
<protein>
    <recommendedName>
        <fullName evidence="1">Large ribosomal subunit protein eL31</fullName>
    </recommendedName>
    <alternativeName>
        <fullName evidence="2">50S ribosomal protein L31e</fullName>
    </alternativeName>
</protein>
<proteinExistence type="inferred from homology"/>
<dbReference type="EMBL" id="CP001400">
    <property type="protein sequence ID" value="ACP38500.1"/>
    <property type="molecule type" value="Genomic_DNA"/>
</dbReference>
<dbReference type="RefSeq" id="WP_012711730.1">
    <property type="nucleotide sequence ID" value="NC_012588.1"/>
</dbReference>
<dbReference type="SMR" id="C3MXG6"/>
<dbReference type="KEGG" id="sia:M1425_1754"/>
<dbReference type="HOGENOM" id="CLU_2461923_0_0_2"/>
<dbReference type="Proteomes" id="UP000001350">
    <property type="component" value="Chromosome"/>
</dbReference>
<dbReference type="GO" id="GO:1990904">
    <property type="term" value="C:ribonucleoprotein complex"/>
    <property type="evidence" value="ECO:0007669"/>
    <property type="project" value="UniProtKB-KW"/>
</dbReference>
<dbReference type="GO" id="GO:0005840">
    <property type="term" value="C:ribosome"/>
    <property type="evidence" value="ECO:0007669"/>
    <property type="project" value="UniProtKB-KW"/>
</dbReference>
<dbReference type="GO" id="GO:0003735">
    <property type="term" value="F:structural constituent of ribosome"/>
    <property type="evidence" value="ECO:0007669"/>
    <property type="project" value="InterPro"/>
</dbReference>
<dbReference type="GO" id="GO:0006412">
    <property type="term" value="P:translation"/>
    <property type="evidence" value="ECO:0007669"/>
    <property type="project" value="UniProtKB-UniRule"/>
</dbReference>
<dbReference type="Gene3D" id="3.10.440.10">
    <property type="match status" value="1"/>
</dbReference>
<dbReference type="HAMAP" id="MF_00410">
    <property type="entry name" value="Ribosomal_eL31"/>
    <property type="match status" value="1"/>
</dbReference>
<dbReference type="InterPro" id="IPR000054">
    <property type="entry name" value="Ribosomal_eL31"/>
</dbReference>
<dbReference type="InterPro" id="IPR023621">
    <property type="entry name" value="Ribosomal_eL31_dom_sf"/>
</dbReference>
<dbReference type="NCBIfam" id="NF002258">
    <property type="entry name" value="PRK01192.1-1"/>
    <property type="match status" value="1"/>
</dbReference>
<dbReference type="Pfam" id="PF01198">
    <property type="entry name" value="Ribosomal_L31e"/>
    <property type="match status" value="1"/>
</dbReference>
<dbReference type="SMART" id="SM01380">
    <property type="entry name" value="Ribosomal_L31e"/>
    <property type="match status" value="1"/>
</dbReference>
<dbReference type="SUPFAM" id="SSF54575">
    <property type="entry name" value="Ribosomal protein L31e"/>
    <property type="match status" value="1"/>
</dbReference>